<accession>O84066</accession>
<feature type="chain" id="PRO_0000090033" description="6-phosphogluconate dehydrogenase, decarboxylating">
    <location>
        <begin position="1"/>
        <end position="480"/>
    </location>
</feature>
<feature type="active site" description="Proton acceptor" evidence="1">
    <location>
        <position position="184"/>
    </location>
</feature>
<feature type="active site" description="Proton donor" evidence="1">
    <location>
        <position position="191"/>
    </location>
</feature>
<feature type="binding site" evidence="1">
    <location>
        <begin position="11"/>
        <end position="16"/>
    </location>
    <ligand>
        <name>NADP(+)</name>
        <dbReference type="ChEBI" id="CHEBI:58349"/>
    </ligand>
</feature>
<feature type="binding site" evidence="1">
    <location>
        <begin position="34"/>
        <end position="36"/>
    </location>
    <ligand>
        <name>NADP(+)</name>
        <dbReference type="ChEBI" id="CHEBI:58349"/>
    </ligand>
</feature>
<feature type="binding site" evidence="1">
    <location>
        <begin position="76"/>
        <end position="78"/>
    </location>
    <ligand>
        <name>NADP(+)</name>
        <dbReference type="ChEBI" id="CHEBI:58349"/>
    </ligand>
</feature>
<feature type="binding site" evidence="1">
    <location>
        <position position="104"/>
    </location>
    <ligand>
        <name>NADP(+)</name>
        <dbReference type="ChEBI" id="CHEBI:58349"/>
    </ligand>
</feature>
<feature type="binding site" description="in other chain" evidence="1">
    <location>
        <position position="104"/>
    </location>
    <ligand>
        <name>substrate</name>
        <note>ligand shared between dimeric partners</note>
    </ligand>
</feature>
<feature type="binding site" description="in other chain" evidence="1">
    <location>
        <begin position="130"/>
        <end position="132"/>
    </location>
    <ligand>
        <name>substrate</name>
        <note>ligand shared between dimeric partners</note>
    </ligand>
</feature>
<feature type="binding site" description="in other chain" evidence="1">
    <location>
        <begin position="187"/>
        <end position="188"/>
    </location>
    <ligand>
        <name>substrate</name>
        <note>ligand shared between dimeric partners</note>
    </ligand>
</feature>
<feature type="binding site" description="in other chain" evidence="1">
    <location>
        <position position="192"/>
    </location>
    <ligand>
        <name>substrate</name>
        <note>ligand shared between dimeric partners</note>
    </ligand>
</feature>
<feature type="binding site" description="in other chain" evidence="1">
    <location>
        <position position="261"/>
    </location>
    <ligand>
        <name>substrate</name>
        <note>ligand shared between dimeric partners</note>
    </ligand>
</feature>
<feature type="binding site" description="in other chain" evidence="1">
    <location>
        <position position="288"/>
    </location>
    <ligand>
        <name>substrate</name>
        <note>ligand shared between dimeric partners</note>
    </ligand>
</feature>
<feature type="binding site" evidence="1">
    <location>
        <position position="448"/>
    </location>
    <ligand>
        <name>substrate</name>
        <note>ligand shared between dimeric partners</note>
    </ligand>
</feature>
<feature type="binding site" evidence="1">
    <location>
        <position position="454"/>
    </location>
    <ligand>
        <name>substrate</name>
        <note>ligand shared between dimeric partners</note>
    </ligand>
</feature>
<name>6PGD_CHLTR</name>
<protein>
    <recommendedName>
        <fullName>6-phosphogluconate dehydrogenase, decarboxylating</fullName>
        <ecNumber>1.1.1.44</ecNumber>
    </recommendedName>
</protein>
<gene>
    <name type="primary">gnd</name>
    <name type="ordered locus">CT_063</name>
</gene>
<keyword id="KW-0311">Gluconate utilization</keyword>
<keyword id="KW-0521">NADP</keyword>
<keyword id="KW-0560">Oxidoreductase</keyword>
<keyword id="KW-0570">Pentose shunt</keyword>
<keyword id="KW-1185">Reference proteome</keyword>
<proteinExistence type="inferred from homology"/>
<reference key="1">
    <citation type="journal article" date="1998" name="Science">
        <title>Genome sequence of an obligate intracellular pathogen of humans: Chlamydia trachomatis.</title>
        <authorList>
            <person name="Stephens R.S."/>
            <person name="Kalman S."/>
            <person name="Lammel C.J."/>
            <person name="Fan J."/>
            <person name="Marathe R."/>
            <person name="Aravind L."/>
            <person name="Mitchell W.P."/>
            <person name="Olinger L."/>
            <person name="Tatusov R.L."/>
            <person name="Zhao Q."/>
            <person name="Koonin E.V."/>
            <person name="Davis R.W."/>
        </authorList>
    </citation>
    <scope>NUCLEOTIDE SEQUENCE [LARGE SCALE GENOMIC DNA]</scope>
    <source>
        <strain>ATCC VR-885 / DSM 19411 / UW-3/Cx</strain>
    </source>
</reference>
<evidence type="ECO:0000250" key="1"/>
<evidence type="ECO:0000305" key="2"/>
<comment type="function">
    <text evidence="1">Catalyzes the oxidative decarboxylation of 6-phosphogluconate to ribulose 5-phosphate and CO(2), with concomitant reduction of NADP to NADPH.</text>
</comment>
<comment type="catalytic activity">
    <reaction>
        <text>6-phospho-D-gluconate + NADP(+) = D-ribulose 5-phosphate + CO2 + NADPH</text>
        <dbReference type="Rhea" id="RHEA:10116"/>
        <dbReference type="ChEBI" id="CHEBI:16526"/>
        <dbReference type="ChEBI" id="CHEBI:57783"/>
        <dbReference type="ChEBI" id="CHEBI:58121"/>
        <dbReference type="ChEBI" id="CHEBI:58349"/>
        <dbReference type="ChEBI" id="CHEBI:58759"/>
        <dbReference type="EC" id="1.1.1.44"/>
    </reaction>
</comment>
<comment type="pathway">
    <text>Carbohydrate degradation; pentose phosphate pathway; D-ribulose 5-phosphate from D-glucose 6-phosphate (oxidative stage): step 3/3.</text>
</comment>
<comment type="subunit">
    <text evidence="1">Homodimer.</text>
</comment>
<comment type="similarity">
    <text evidence="2">Belongs to the 6-phosphogluconate dehydrogenase family.</text>
</comment>
<sequence length="480" mass="52667">MAPNTDIGLIGLAVMGKNLVLNMVDHGFSVSVYNRSPAKTEEFLKDHGESGALQGFTTIQEFVQSLKRPRKIMIMIKAGAPVDEMIASLLPFLEEGDILIDGGNSYYLDSEQRYVDLKKEGILFVGMGVSGGEEGARKGPSIMPGGNIDAWPAIAPIFQSIAAQVDGRPCCSWIGTGGAGHFVKAVHNGIEYGDIQLICETYEILKTRLNLSLEQIGNIFFEWNQTDLNSYLIGAAAAVLIAKDENGNAIASTILDVAGQKGTGRWVAEDAIKAGVPMSLIIESVLARYLSTWKEVRTKAAQEFPGIPLLCQPPQEASAFIEDVREALYAAKIISYAQGFMLLKQVSQDKGWDLNLGELALIWRGGCIIQSAFLDKIHQGFENSPEAHSLILQDYFKKVLFDSETGFRRAVLHAIGSGVAIPCLSSALSFYDGYRTVDSSLFLVQGLRDYFGAHGYERRDCPRGEFYHTDWLETKKTFRV</sequence>
<dbReference type="EC" id="1.1.1.44"/>
<dbReference type="EMBL" id="AE001273">
    <property type="protein sequence ID" value="AAC67654.1"/>
    <property type="molecule type" value="Genomic_DNA"/>
</dbReference>
<dbReference type="PIR" id="A71561">
    <property type="entry name" value="A71561"/>
</dbReference>
<dbReference type="RefSeq" id="NP_219566.1">
    <property type="nucleotide sequence ID" value="NC_000117.1"/>
</dbReference>
<dbReference type="RefSeq" id="WP_010725014.1">
    <property type="nucleotide sequence ID" value="NC_000117.1"/>
</dbReference>
<dbReference type="SMR" id="O84066"/>
<dbReference type="FunCoup" id="O84066">
    <property type="interactions" value="214"/>
</dbReference>
<dbReference type="STRING" id="272561.CT_063"/>
<dbReference type="EnsemblBacteria" id="AAC67654">
    <property type="protein sequence ID" value="AAC67654"/>
    <property type="gene ID" value="CT_063"/>
</dbReference>
<dbReference type="GeneID" id="884061"/>
<dbReference type="KEGG" id="ctr:CT_063"/>
<dbReference type="PATRIC" id="fig|272561.5.peg.72"/>
<dbReference type="HOGENOM" id="CLU_024540_4_2_0"/>
<dbReference type="InParanoid" id="O84066"/>
<dbReference type="OrthoDB" id="9804542at2"/>
<dbReference type="UniPathway" id="UPA00115">
    <property type="reaction ID" value="UER00410"/>
</dbReference>
<dbReference type="Proteomes" id="UP000000431">
    <property type="component" value="Chromosome"/>
</dbReference>
<dbReference type="GO" id="GO:0005829">
    <property type="term" value="C:cytosol"/>
    <property type="evidence" value="ECO:0000318"/>
    <property type="project" value="GO_Central"/>
</dbReference>
<dbReference type="GO" id="GO:0050661">
    <property type="term" value="F:NADP binding"/>
    <property type="evidence" value="ECO:0000318"/>
    <property type="project" value="GO_Central"/>
</dbReference>
<dbReference type="GO" id="GO:0004616">
    <property type="term" value="F:phosphogluconate dehydrogenase (decarboxylating) activity"/>
    <property type="evidence" value="ECO:0000318"/>
    <property type="project" value="GO_Central"/>
</dbReference>
<dbReference type="GO" id="GO:0019521">
    <property type="term" value="P:D-gluconate metabolic process"/>
    <property type="evidence" value="ECO:0007669"/>
    <property type="project" value="UniProtKB-KW"/>
</dbReference>
<dbReference type="GO" id="GO:0016054">
    <property type="term" value="P:organic acid catabolic process"/>
    <property type="evidence" value="ECO:0007669"/>
    <property type="project" value="UniProtKB-ARBA"/>
</dbReference>
<dbReference type="GO" id="GO:0009051">
    <property type="term" value="P:pentose-phosphate shunt, oxidative branch"/>
    <property type="evidence" value="ECO:0000318"/>
    <property type="project" value="GO_Central"/>
</dbReference>
<dbReference type="FunFam" id="1.10.1040.10:FF:000002">
    <property type="entry name" value="6-phosphogluconate dehydrogenase, decarboxylating"/>
    <property type="match status" value="1"/>
</dbReference>
<dbReference type="FunFam" id="3.40.50.720:FF:000007">
    <property type="entry name" value="6-phosphogluconate dehydrogenase, decarboxylating"/>
    <property type="match status" value="1"/>
</dbReference>
<dbReference type="Gene3D" id="1.20.5.320">
    <property type="entry name" value="6-Phosphogluconate Dehydrogenase, domain 3"/>
    <property type="match status" value="1"/>
</dbReference>
<dbReference type="Gene3D" id="1.10.1040.10">
    <property type="entry name" value="N-(1-d-carboxylethyl)-l-norvaline Dehydrogenase, domain 2"/>
    <property type="match status" value="1"/>
</dbReference>
<dbReference type="Gene3D" id="3.40.50.720">
    <property type="entry name" value="NAD(P)-binding Rossmann-like Domain"/>
    <property type="match status" value="1"/>
</dbReference>
<dbReference type="InterPro" id="IPR008927">
    <property type="entry name" value="6-PGluconate_DH-like_C_sf"/>
</dbReference>
<dbReference type="InterPro" id="IPR013328">
    <property type="entry name" value="6PGD_dom2"/>
</dbReference>
<dbReference type="InterPro" id="IPR006114">
    <property type="entry name" value="6PGDH_C"/>
</dbReference>
<dbReference type="InterPro" id="IPR006113">
    <property type="entry name" value="6PGDH_Gnd/GntZ"/>
</dbReference>
<dbReference type="InterPro" id="IPR006115">
    <property type="entry name" value="6PGDH_NADP-bd"/>
</dbReference>
<dbReference type="InterPro" id="IPR006184">
    <property type="entry name" value="6PGdom_BS"/>
</dbReference>
<dbReference type="InterPro" id="IPR036291">
    <property type="entry name" value="NAD(P)-bd_dom_sf"/>
</dbReference>
<dbReference type="InterPro" id="IPR006183">
    <property type="entry name" value="Pgluconate_DH"/>
</dbReference>
<dbReference type="NCBIfam" id="TIGR00873">
    <property type="entry name" value="gnd"/>
    <property type="match status" value="1"/>
</dbReference>
<dbReference type="NCBIfam" id="NF006765">
    <property type="entry name" value="PRK09287.1"/>
    <property type="match status" value="1"/>
</dbReference>
<dbReference type="PANTHER" id="PTHR11811">
    <property type="entry name" value="6-PHOSPHOGLUCONATE DEHYDROGENASE"/>
    <property type="match status" value="1"/>
</dbReference>
<dbReference type="Pfam" id="PF00393">
    <property type="entry name" value="6PGD"/>
    <property type="match status" value="1"/>
</dbReference>
<dbReference type="Pfam" id="PF03446">
    <property type="entry name" value="NAD_binding_2"/>
    <property type="match status" value="1"/>
</dbReference>
<dbReference type="PIRSF" id="PIRSF000109">
    <property type="entry name" value="6PGD"/>
    <property type="match status" value="1"/>
</dbReference>
<dbReference type="PRINTS" id="PR00076">
    <property type="entry name" value="6PGDHDRGNASE"/>
</dbReference>
<dbReference type="SMART" id="SM01350">
    <property type="entry name" value="6PGD"/>
    <property type="match status" value="1"/>
</dbReference>
<dbReference type="SUPFAM" id="SSF48179">
    <property type="entry name" value="6-phosphogluconate dehydrogenase C-terminal domain-like"/>
    <property type="match status" value="1"/>
</dbReference>
<dbReference type="SUPFAM" id="SSF51735">
    <property type="entry name" value="NAD(P)-binding Rossmann-fold domains"/>
    <property type="match status" value="1"/>
</dbReference>
<dbReference type="PROSITE" id="PS00461">
    <property type="entry name" value="6PGD"/>
    <property type="match status" value="1"/>
</dbReference>
<organism>
    <name type="scientific">Chlamydia trachomatis serovar D (strain ATCC VR-885 / DSM 19411 / UW-3/Cx)</name>
    <dbReference type="NCBI Taxonomy" id="272561"/>
    <lineage>
        <taxon>Bacteria</taxon>
        <taxon>Pseudomonadati</taxon>
        <taxon>Chlamydiota</taxon>
        <taxon>Chlamydiia</taxon>
        <taxon>Chlamydiales</taxon>
        <taxon>Chlamydiaceae</taxon>
        <taxon>Chlamydia/Chlamydophila group</taxon>
        <taxon>Chlamydia</taxon>
    </lineage>
</organism>